<accession>Q6MQD7</accession>
<comment type="function">
    <text evidence="1">Assembles around the rod to form the L-ring and probably protects the motor/basal body from shearing forces during rotation.</text>
</comment>
<comment type="subunit">
    <text evidence="1">The basal body constitutes a major portion of the flagellar organelle and consists of four rings (L,P,S, and M) mounted on a central rod.</text>
</comment>
<comment type="subcellular location">
    <subcellularLocation>
        <location evidence="1">Periplasm</location>
    </subcellularLocation>
    <subcellularLocation>
        <location evidence="1">Bacterial flagellum basal body</location>
    </subcellularLocation>
</comment>
<comment type="similarity">
    <text evidence="1">Belongs to the FlgI family.</text>
</comment>
<dbReference type="EMBL" id="BX842647">
    <property type="protein sequence ID" value="CAE78510.1"/>
    <property type="molecule type" value="Genomic_DNA"/>
</dbReference>
<dbReference type="RefSeq" id="WP_011163112.1">
    <property type="nucleotide sequence ID" value="NC_005363.1"/>
</dbReference>
<dbReference type="SMR" id="Q6MQD7"/>
<dbReference type="STRING" id="264462.Bd0535"/>
<dbReference type="GeneID" id="93011638"/>
<dbReference type="KEGG" id="bba:Bd0535"/>
<dbReference type="eggNOG" id="COG1706">
    <property type="taxonomic scope" value="Bacteria"/>
</dbReference>
<dbReference type="HOGENOM" id="CLU_045235_1_0_7"/>
<dbReference type="Proteomes" id="UP000008080">
    <property type="component" value="Chromosome"/>
</dbReference>
<dbReference type="GO" id="GO:0009428">
    <property type="term" value="C:bacterial-type flagellum basal body, distal rod, P ring"/>
    <property type="evidence" value="ECO:0007669"/>
    <property type="project" value="InterPro"/>
</dbReference>
<dbReference type="GO" id="GO:0030288">
    <property type="term" value="C:outer membrane-bounded periplasmic space"/>
    <property type="evidence" value="ECO:0007669"/>
    <property type="project" value="InterPro"/>
</dbReference>
<dbReference type="GO" id="GO:0005198">
    <property type="term" value="F:structural molecule activity"/>
    <property type="evidence" value="ECO:0007669"/>
    <property type="project" value="InterPro"/>
</dbReference>
<dbReference type="GO" id="GO:0071973">
    <property type="term" value="P:bacterial-type flagellum-dependent cell motility"/>
    <property type="evidence" value="ECO:0007669"/>
    <property type="project" value="InterPro"/>
</dbReference>
<dbReference type="HAMAP" id="MF_00416">
    <property type="entry name" value="FlgI"/>
    <property type="match status" value="1"/>
</dbReference>
<dbReference type="InterPro" id="IPR001782">
    <property type="entry name" value="Flag_FlgI"/>
</dbReference>
<dbReference type="NCBIfam" id="NF003676">
    <property type="entry name" value="PRK05303.1"/>
    <property type="match status" value="1"/>
</dbReference>
<dbReference type="PANTHER" id="PTHR30381">
    <property type="entry name" value="FLAGELLAR P-RING PERIPLASMIC PROTEIN FLGI"/>
    <property type="match status" value="1"/>
</dbReference>
<dbReference type="PANTHER" id="PTHR30381:SF0">
    <property type="entry name" value="FLAGELLAR P-RING PROTEIN"/>
    <property type="match status" value="1"/>
</dbReference>
<dbReference type="Pfam" id="PF02119">
    <property type="entry name" value="FlgI"/>
    <property type="match status" value="2"/>
</dbReference>
<dbReference type="PRINTS" id="PR01010">
    <property type="entry name" value="FLGPRINGFLGI"/>
</dbReference>
<organism>
    <name type="scientific">Bdellovibrio bacteriovorus (strain ATCC 15356 / DSM 50701 / NCIMB 9529 / HD100)</name>
    <dbReference type="NCBI Taxonomy" id="264462"/>
    <lineage>
        <taxon>Bacteria</taxon>
        <taxon>Pseudomonadati</taxon>
        <taxon>Bdellovibrionota</taxon>
        <taxon>Bdellovibrionia</taxon>
        <taxon>Bdellovibrionales</taxon>
        <taxon>Pseudobdellovibrionaceae</taxon>
        <taxon>Bdellovibrio</taxon>
    </lineage>
</organism>
<sequence>MNKITNFLILSAVLFFSLIESANAARLKDIASIRGVRENQLIGYGIVVGLKGTGDGKNEFMSKSMVRMLDKLGMKLDNVDFASKNVAAVIVTATMPAFGKAGNPIDINVSAIGEASSLQGGTLLQTPLRAANEQVFAVAQGSIVIGGDGKDSHTTAGRIPNGATIERDMTADFSSRKMYRLTLINPDFTTAARSVLTINKELGGHYASAKDSGTIDIITPFAYENRGVELLATIESIEINPDMKARVVVNEKTGTIVIGDKVKISRVAISHGALSVKVGDGKKGAEEKVAVLDSGVSVGELVQALNKLGVSPKDLITILQSIKSAGALHGELEVL</sequence>
<reference key="1">
    <citation type="journal article" date="2004" name="Science">
        <title>A predator unmasked: life cycle of Bdellovibrio bacteriovorus from a genomic perspective.</title>
        <authorList>
            <person name="Rendulic S."/>
            <person name="Jagtap P."/>
            <person name="Rosinus A."/>
            <person name="Eppinger M."/>
            <person name="Baar C."/>
            <person name="Lanz C."/>
            <person name="Keller H."/>
            <person name="Lambert C."/>
            <person name="Evans K.J."/>
            <person name="Goesmann A."/>
            <person name="Meyer F."/>
            <person name="Sockett R.E."/>
            <person name="Schuster S.C."/>
        </authorList>
    </citation>
    <scope>NUCLEOTIDE SEQUENCE [LARGE SCALE GENOMIC DNA]</scope>
    <source>
        <strain>ATCC 15356 / DSM 50701 / NCIMB 9529 / HD100</strain>
    </source>
</reference>
<feature type="signal peptide" evidence="1">
    <location>
        <begin position="1"/>
        <end position="24"/>
    </location>
</feature>
<feature type="chain" id="PRO_0000041783" description="Flagellar P-ring protein">
    <location>
        <begin position="25"/>
        <end position="335"/>
    </location>
</feature>
<proteinExistence type="inferred from homology"/>
<gene>
    <name evidence="1" type="primary">flgI</name>
    <name type="ordered locus">Bd0535</name>
</gene>
<keyword id="KW-0975">Bacterial flagellum</keyword>
<keyword id="KW-0574">Periplasm</keyword>
<keyword id="KW-1185">Reference proteome</keyword>
<keyword id="KW-0732">Signal</keyword>
<protein>
    <recommendedName>
        <fullName evidence="1">Flagellar P-ring protein</fullName>
    </recommendedName>
    <alternativeName>
        <fullName evidence="1">Basal body P-ring protein</fullName>
    </alternativeName>
</protein>
<evidence type="ECO:0000255" key="1">
    <source>
        <dbReference type="HAMAP-Rule" id="MF_00416"/>
    </source>
</evidence>
<name>FLGI_BDEBA</name>